<feature type="signal peptide" evidence="2">
    <location>
        <begin position="1"/>
        <end position="26"/>
    </location>
</feature>
<feature type="propeptide" id="PRO_0000365113" evidence="1">
    <location>
        <begin position="27"/>
        <end position="84"/>
    </location>
</feature>
<feature type="peptide" id="PRO_0000365114" description="Diuretic hormone 45">
    <location>
        <begin position="87"/>
        <end position="131"/>
    </location>
</feature>
<feature type="propeptide" id="PRO_0000365115" evidence="1">
    <location>
        <begin position="135"/>
        <end position="147"/>
    </location>
</feature>
<feature type="modified residue" description="Valine amide" evidence="1">
    <location>
        <position position="131"/>
    </location>
</feature>
<reference evidence="4" key="1">
    <citation type="submission" date="2007-03" db="EMBL/GenBank/DDBJ databases">
        <title>Comprehensive analysis of neuropeptide genes in the silkworm, Bombyx mori.</title>
        <authorList>
            <person name="Tanaka Y."/>
            <person name="Roller L."/>
            <person name="Yamanaka N."/>
            <person name="Kataoka H."/>
        </authorList>
    </citation>
    <scope>NUCLEOTIDE SEQUENCE [MRNA]</scope>
</reference>
<comment type="function">
    <text evidence="3">Regulation of fluid secretion.</text>
</comment>
<comment type="subcellular location">
    <subcellularLocation>
        <location evidence="3">Secreted</location>
    </subcellularLocation>
</comment>
<comment type="similarity">
    <text evidence="2">Belongs to the sauvagine/corticotropin-releasing factor/urotensin I family.</text>
</comment>
<proteinExistence type="evidence at transcript level"/>
<evidence type="ECO:0000250" key="1">
    <source>
        <dbReference type="UniProtKB" id="P21819"/>
    </source>
</evidence>
<evidence type="ECO:0000255" key="2"/>
<evidence type="ECO:0000305" key="3"/>
<evidence type="ECO:0000312" key="4">
    <source>
        <dbReference type="EMBL" id="BAG50375.1"/>
    </source>
</evidence>
<dbReference type="EMBL" id="AB298936">
    <property type="protein sequence ID" value="BAG50375.1"/>
    <property type="molecule type" value="mRNA"/>
</dbReference>
<dbReference type="STRING" id="7091.B3IUE0"/>
<dbReference type="PaxDb" id="7091-BGIBMGA007762-TA"/>
<dbReference type="EnsemblMetazoa" id="NM_001130896.1">
    <property type="protein sequence ID" value="NP_001124368.1"/>
    <property type="gene ID" value="GeneID_100174841"/>
</dbReference>
<dbReference type="EnsemblMetazoa" id="XM_012692258.3">
    <property type="protein sequence ID" value="XP_012547712.1"/>
    <property type="gene ID" value="GeneID_100174841"/>
</dbReference>
<dbReference type="CTD" id="41170"/>
<dbReference type="eggNOG" id="ENOG502SCPI">
    <property type="taxonomic scope" value="Eukaryota"/>
</dbReference>
<dbReference type="InParanoid" id="B3IUE0"/>
<dbReference type="Proteomes" id="UP000005204">
    <property type="component" value="Unassembled WGS sequence"/>
</dbReference>
<dbReference type="GO" id="GO:0005576">
    <property type="term" value="C:extracellular region"/>
    <property type="evidence" value="ECO:0000250"/>
    <property type="project" value="UniProtKB"/>
</dbReference>
<dbReference type="GO" id="GO:0008613">
    <property type="term" value="F:diuretic hormone activity"/>
    <property type="evidence" value="ECO:0000250"/>
    <property type="project" value="UniProtKB"/>
</dbReference>
<dbReference type="GO" id="GO:0007589">
    <property type="term" value="P:body fluid secretion"/>
    <property type="evidence" value="ECO:0000250"/>
    <property type="project" value="UniProtKB"/>
</dbReference>
<dbReference type="InterPro" id="IPR018446">
    <property type="entry name" value="Corticotropin-releasing_fac_CS"/>
</dbReference>
<dbReference type="InterPro" id="IPR000187">
    <property type="entry name" value="CRF"/>
</dbReference>
<dbReference type="Pfam" id="PF00473">
    <property type="entry name" value="CRF"/>
    <property type="match status" value="1"/>
</dbReference>
<dbReference type="SMART" id="SM00039">
    <property type="entry name" value="CRF"/>
    <property type="match status" value="1"/>
</dbReference>
<dbReference type="PROSITE" id="PS00511">
    <property type="entry name" value="CRF"/>
    <property type="match status" value="1"/>
</dbReference>
<protein>
    <recommendedName>
        <fullName>Diuretic hormone 45</fullName>
    </recommendedName>
</protein>
<organism>
    <name type="scientific">Bombyx mori</name>
    <name type="common">Silk moth</name>
    <dbReference type="NCBI Taxonomy" id="7091"/>
    <lineage>
        <taxon>Eukaryota</taxon>
        <taxon>Metazoa</taxon>
        <taxon>Ecdysozoa</taxon>
        <taxon>Arthropoda</taxon>
        <taxon>Hexapoda</taxon>
        <taxon>Insecta</taxon>
        <taxon>Pterygota</taxon>
        <taxon>Neoptera</taxon>
        <taxon>Endopterygota</taxon>
        <taxon>Lepidoptera</taxon>
        <taxon>Glossata</taxon>
        <taxon>Ditrysia</taxon>
        <taxon>Bombycoidea</taxon>
        <taxon>Bombycidae</taxon>
        <taxon>Bombycinae</taxon>
        <taxon>Bombyx</taxon>
    </lineage>
</organism>
<name>DIH45_BOMMO</name>
<gene>
    <name type="primary">dh45</name>
</gene>
<keyword id="KW-0027">Amidation</keyword>
<keyword id="KW-0165">Cleavage on pair of basic residues</keyword>
<keyword id="KW-0372">Hormone</keyword>
<keyword id="KW-1185">Reference proteome</keyword>
<keyword id="KW-0964">Secreted</keyword>
<keyword id="KW-0732">Signal</keyword>
<accession>B3IUE0</accession>
<sequence length="147" mass="16479">MMWWAVWCAAMVAGSVFTAAAPPTDSIDLMQMDPSLADDESLGFAMQSLSGRYAAAPWLYLLADVSHDPQRMAEFSQSSGRARPKRKMPSLSINNPMEVLRQRLLLEVARKQMREANQRQAVANRLFLQNVGKRGAWGEPASYLYNN</sequence>